<dbReference type="EMBL" id="X87107">
    <property type="protein sequence ID" value="CAA60588.1"/>
    <property type="molecule type" value="mRNA"/>
</dbReference>
<dbReference type="EMBL" id="BC078761">
    <property type="protein sequence ID" value="AAH78761.1"/>
    <property type="molecule type" value="mRNA"/>
</dbReference>
<dbReference type="EMBL" id="BC097295">
    <property type="protein sequence ID" value="AAH97295.1"/>
    <property type="molecule type" value="mRNA"/>
</dbReference>
<dbReference type="EMBL" id="S71021">
    <property type="protein sequence ID" value="AAB30818.2"/>
    <property type="molecule type" value="mRNA"/>
</dbReference>
<dbReference type="PIR" id="S11416">
    <property type="entry name" value="S11416"/>
</dbReference>
<dbReference type="PIR" id="T50782">
    <property type="entry name" value="T50782"/>
</dbReference>
<dbReference type="RefSeq" id="NP_446423.2">
    <property type="nucleotide sequence ID" value="NM_053971.3"/>
</dbReference>
<dbReference type="RefSeq" id="XP_006249440.1">
    <property type="nucleotide sequence ID" value="XM_006249378.5"/>
</dbReference>
<dbReference type="RefSeq" id="XP_038944962.1">
    <property type="nucleotide sequence ID" value="XM_039089034.2"/>
</dbReference>
<dbReference type="PDB" id="7QGG">
    <property type="method" value="EM"/>
    <property type="resolution" value="2.86 A"/>
    <property type="chains" value="G=1-298"/>
</dbReference>
<dbReference type="PDBsum" id="7QGG"/>
<dbReference type="EMDB" id="EMD-13954"/>
<dbReference type="SMR" id="P21533"/>
<dbReference type="BioGRID" id="250640">
    <property type="interactions" value="5"/>
</dbReference>
<dbReference type="FunCoup" id="P21533">
    <property type="interactions" value="3301"/>
</dbReference>
<dbReference type="IntAct" id="P21533">
    <property type="interactions" value="10"/>
</dbReference>
<dbReference type="MINT" id="P21533"/>
<dbReference type="STRING" id="10116.ENSRNOP00000038065"/>
<dbReference type="GlyGen" id="P21533">
    <property type="glycosylation" value="2 sites, 1 O-linked glycan (1 site)"/>
</dbReference>
<dbReference type="iPTMnet" id="P21533"/>
<dbReference type="PhosphoSitePlus" id="P21533"/>
<dbReference type="SwissPalm" id="P21533"/>
<dbReference type="jPOST" id="P21533"/>
<dbReference type="PaxDb" id="10116-ENSRNOP00000051135"/>
<dbReference type="GeneID" id="117042"/>
<dbReference type="KEGG" id="rno:117042"/>
<dbReference type="UCSC" id="RGD:619826">
    <property type="organism name" value="rat"/>
</dbReference>
<dbReference type="AGR" id="RGD:619826"/>
<dbReference type="CTD" id="6128"/>
<dbReference type="RGD" id="619826">
    <property type="gene designation" value="Rpl6"/>
</dbReference>
<dbReference type="VEuPathDB" id="HostDB:ENSRNOG00000025936"/>
<dbReference type="eggNOG" id="KOG1694">
    <property type="taxonomic scope" value="Eukaryota"/>
</dbReference>
<dbReference type="HOGENOM" id="CLU_066767_0_0_1"/>
<dbReference type="InParanoid" id="P21533"/>
<dbReference type="PhylomeDB" id="P21533"/>
<dbReference type="Reactome" id="R-RNO-156827">
    <property type="pathway name" value="L13a-mediated translational silencing of Ceruloplasmin expression"/>
</dbReference>
<dbReference type="Reactome" id="R-RNO-1799339">
    <property type="pathway name" value="SRP-dependent cotranslational protein targeting to membrane"/>
</dbReference>
<dbReference type="Reactome" id="R-RNO-6791226">
    <property type="pathway name" value="Major pathway of rRNA processing in the nucleolus and cytosol"/>
</dbReference>
<dbReference type="Reactome" id="R-RNO-72689">
    <property type="pathway name" value="Formation of a pool of free 40S subunits"/>
</dbReference>
<dbReference type="Reactome" id="R-RNO-72706">
    <property type="pathway name" value="GTP hydrolysis and joining of the 60S ribosomal subunit"/>
</dbReference>
<dbReference type="Reactome" id="R-RNO-975956">
    <property type="pathway name" value="Nonsense Mediated Decay (NMD) independent of the Exon Junction Complex (EJC)"/>
</dbReference>
<dbReference type="Reactome" id="R-RNO-975957">
    <property type="pathway name" value="Nonsense Mediated Decay (NMD) enhanced by the Exon Junction Complex (EJC)"/>
</dbReference>
<dbReference type="PRO" id="PR:P21533"/>
<dbReference type="Proteomes" id="UP000002494">
    <property type="component" value="Chromosome 12"/>
</dbReference>
<dbReference type="Bgee" id="ENSRNOG00000025936">
    <property type="expression patterns" value="Expressed in ovary and 19 other cell types or tissues"/>
</dbReference>
<dbReference type="GO" id="GO:0031672">
    <property type="term" value="C:A band"/>
    <property type="evidence" value="ECO:0000314"/>
    <property type="project" value="RGD"/>
</dbReference>
<dbReference type="GO" id="GO:0005737">
    <property type="term" value="C:cytoplasm"/>
    <property type="evidence" value="ECO:0000266"/>
    <property type="project" value="RGD"/>
</dbReference>
<dbReference type="GO" id="GO:0036464">
    <property type="term" value="C:cytoplasmic ribonucleoprotein granule"/>
    <property type="evidence" value="ECO:0000266"/>
    <property type="project" value="RGD"/>
</dbReference>
<dbReference type="GO" id="GO:0098556">
    <property type="term" value="C:cytoplasmic side of rough endoplasmic reticulum membrane"/>
    <property type="evidence" value="ECO:0000266"/>
    <property type="project" value="RGD"/>
</dbReference>
<dbReference type="GO" id="GO:0022625">
    <property type="term" value="C:cytosolic large ribosomal subunit"/>
    <property type="evidence" value="ECO:0000314"/>
    <property type="project" value="RGD"/>
</dbReference>
<dbReference type="GO" id="GO:0022626">
    <property type="term" value="C:cytosolic ribosome"/>
    <property type="evidence" value="ECO:0000266"/>
    <property type="project" value="RGD"/>
</dbReference>
<dbReference type="GO" id="GO:0015934">
    <property type="term" value="C:large ribosomal subunit"/>
    <property type="evidence" value="ECO:0000266"/>
    <property type="project" value="RGD"/>
</dbReference>
<dbReference type="GO" id="GO:0005634">
    <property type="term" value="C:nucleus"/>
    <property type="evidence" value="ECO:0000266"/>
    <property type="project" value="RGD"/>
</dbReference>
<dbReference type="GO" id="GO:0014069">
    <property type="term" value="C:postsynaptic density"/>
    <property type="evidence" value="ECO:0000266"/>
    <property type="project" value="RGD"/>
</dbReference>
<dbReference type="GO" id="GO:0045202">
    <property type="term" value="C:synapse"/>
    <property type="evidence" value="ECO:0000266"/>
    <property type="project" value="RGD"/>
</dbReference>
<dbReference type="GO" id="GO:1990932">
    <property type="term" value="F:5.8S rRNA binding"/>
    <property type="evidence" value="ECO:0000314"/>
    <property type="project" value="RGD"/>
</dbReference>
<dbReference type="GO" id="GO:0003729">
    <property type="term" value="F:mRNA binding"/>
    <property type="evidence" value="ECO:0000314"/>
    <property type="project" value="RGD"/>
</dbReference>
<dbReference type="GO" id="GO:0003723">
    <property type="term" value="F:RNA binding"/>
    <property type="evidence" value="ECO:0000318"/>
    <property type="project" value="GO_Central"/>
</dbReference>
<dbReference type="GO" id="GO:0003735">
    <property type="term" value="F:structural constituent of ribosome"/>
    <property type="evidence" value="ECO:0000266"/>
    <property type="project" value="RGD"/>
</dbReference>
<dbReference type="GO" id="GO:0000049">
    <property type="term" value="F:tRNA binding"/>
    <property type="evidence" value="ECO:0000314"/>
    <property type="project" value="RGD"/>
</dbReference>
<dbReference type="GO" id="GO:0002181">
    <property type="term" value="P:cytoplasmic translation"/>
    <property type="evidence" value="ECO:0000250"/>
    <property type="project" value="UniProtKB"/>
</dbReference>
<dbReference type="CDD" id="cd13156">
    <property type="entry name" value="KOW_RPL6"/>
    <property type="match status" value="1"/>
</dbReference>
<dbReference type="FunFam" id="2.30.30.30:FF:000020">
    <property type="entry name" value="60S ribosomal protein L6"/>
    <property type="match status" value="1"/>
</dbReference>
<dbReference type="Gene3D" id="2.30.30.30">
    <property type="match status" value="1"/>
</dbReference>
<dbReference type="InterPro" id="IPR000915">
    <property type="entry name" value="60S_ribosomal_eL6"/>
</dbReference>
<dbReference type="InterPro" id="IPR014722">
    <property type="entry name" value="Rib_uL2_dom2"/>
</dbReference>
<dbReference type="InterPro" id="IPR049633">
    <property type="entry name" value="Ribosomal_eL6_CS"/>
</dbReference>
<dbReference type="InterPro" id="IPR041997">
    <property type="entry name" value="Ribosomal_eL6_KOW"/>
</dbReference>
<dbReference type="InterPro" id="IPR005568">
    <property type="entry name" value="Ribosomal_uL6_N"/>
</dbReference>
<dbReference type="InterPro" id="IPR008991">
    <property type="entry name" value="Translation_prot_SH3-like_sf"/>
</dbReference>
<dbReference type="PANTHER" id="PTHR10715">
    <property type="entry name" value="60S RIBOSOMAL PROTEIN L6"/>
    <property type="match status" value="1"/>
</dbReference>
<dbReference type="PANTHER" id="PTHR10715:SF0">
    <property type="entry name" value="LARGE RIBOSOMAL SUBUNIT PROTEIN EL6"/>
    <property type="match status" value="1"/>
</dbReference>
<dbReference type="Pfam" id="PF01159">
    <property type="entry name" value="Ribosomal_L6e"/>
    <property type="match status" value="1"/>
</dbReference>
<dbReference type="Pfam" id="PF03868">
    <property type="entry name" value="Ribosomal_L6e_N"/>
    <property type="match status" value="1"/>
</dbReference>
<dbReference type="SUPFAM" id="SSF50104">
    <property type="entry name" value="Translation proteins SH3-like domain"/>
    <property type="match status" value="1"/>
</dbReference>
<dbReference type="PROSITE" id="PS01170">
    <property type="entry name" value="RIBOSOMAL_L6E"/>
    <property type="match status" value="1"/>
</dbReference>
<comment type="function">
    <text evidence="2">Component of the large ribosomal subunit. The ribosome is a large ribonucleoprotein complex responsible for the synthesis of proteins in the cell.</text>
</comment>
<comment type="subunit">
    <text evidence="1 2">Component of the large ribosomal subunit (By similarity). May bind IPO9 with low affinity (By similarity).</text>
</comment>
<comment type="subcellular location">
    <subcellularLocation>
        <location evidence="2">Cytoplasm</location>
        <location evidence="2">Cytosol</location>
    </subcellularLocation>
    <subcellularLocation>
        <location evidence="2">Cytoplasm</location>
    </subcellularLocation>
    <subcellularLocation>
        <location evidence="3">Rough endoplasmic reticulum</location>
    </subcellularLocation>
    <text evidence="2 3">Detected on cytosolic polysomes (By similarity). Detected in ribosomes that are associated with the rough endoplasmic reticulum (By similarity).</text>
</comment>
<comment type="similarity">
    <text evidence="6">Belongs to the eukaryotic ribosomal protein eL6 family.</text>
</comment>
<proteinExistence type="evidence at protein level"/>
<evidence type="ECO:0000250" key="1">
    <source>
        <dbReference type="UniProtKB" id="P47911"/>
    </source>
</evidence>
<evidence type="ECO:0000250" key="2">
    <source>
        <dbReference type="UniProtKB" id="Q02878"/>
    </source>
</evidence>
<evidence type="ECO:0000250" key="3">
    <source>
        <dbReference type="UniProtKB" id="Q2YGT9"/>
    </source>
</evidence>
<evidence type="ECO:0000256" key="4">
    <source>
        <dbReference type="SAM" id="MobiDB-lite"/>
    </source>
</evidence>
<evidence type="ECO:0000269" key="5">
    <source>
    </source>
</evidence>
<evidence type="ECO:0000305" key="6"/>
<sequence>MAGEKAEKPDKKEQKPAAKKAGGDATAPRALPAGAVKKSSSKAKKLRKSKPHCSRNPVLVRGIGRYSRSAMYSRKALYKRKYSAAKTKVEKKKKKEKVLATVTKTVGGDKNGGTRVVKLRKMPRYYPTEDVPRKLLSHGKKPFSQHVRRLRSSITPGTVLIILTGRHRGKRVVFLKQLGSGLLLVTGPLALNRVPLRRTHQKFVIATSTKVDISKVKIPKHLTDAYFKKKPLRKPRHQEGEIFDTEKEKYEITEQRKADQKAVDSQILPKIKAVPQLQGYLRSQFSLTNGMYPHKLVF</sequence>
<protein>
    <recommendedName>
        <fullName evidence="6">Large ribosomal subunit protein eL6</fullName>
    </recommendedName>
    <alternativeName>
        <fullName>60S ribosomal protein L6</fullName>
    </alternativeName>
    <alternativeName>
        <fullName>Neoplasm-related protein C140</fullName>
    </alternativeName>
</protein>
<name>RL6_RAT</name>
<keyword id="KW-0002">3D-structure</keyword>
<keyword id="KW-0007">Acetylation</keyword>
<keyword id="KW-0963">Cytoplasm</keyword>
<keyword id="KW-0903">Direct protein sequencing</keyword>
<keyword id="KW-0256">Endoplasmic reticulum</keyword>
<keyword id="KW-1017">Isopeptide bond</keyword>
<keyword id="KW-0597">Phosphoprotein</keyword>
<keyword id="KW-1185">Reference proteome</keyword>
<keyword id="KW-0687">Ribonucleoprotein</keyword>
<keyword id="KW-0689">Ribosomal protein</keyword>
<keyword id="KW-0832">Ubl conjugation</keyword>
<accession>P21533</accession>
<accession>Q4QRA9</accession>
<accession>Q64624</accession>
<accession>Q68G26</accession>
<reference key="1">
    <citation type="journal article" date="1996" name="Biochem. Mol. Biol. Int.">
        <title>The primary structure of rat ribosomal protein L6.</title>
        <authorList>
            <person name="Chan Y.-L."/>
            <person name="Wool I.G."/>
        </authorList>
    </citation>
    <scope>NUCLEOTIDE SEQUENCE [MRNA]</scope>
    <scope>PROTEIN SEQUENCE OF 71-89 AND 122-134</scope>
    <source>
        <strain>Sprague-Dawley</strain>
        <tissue>Liver</tissue>
    </source>
</reference>
<reference key="2">
    <citation type="journal article" date="2004" name="Genome Res.">
        <title>The status, quality, and expansion of the NIH full-length cDNA project: the Mammalian Gene Collection (MGC).</title>
        <authorList>
            <consortium name="The MGC Project Team"/>
        </authorList>
    </citation>
    <scope>NUCLEOTIDE SEQUENCE [LARGE SCALE MRNA]</scope>
    <source>
        <tissue>Lung</tissue>
        <tissue>Placenta</tissue>
    </source>
</reference>
<reference key="3">
    <citation type="journal article" date="1979" name="J. Supramol. Struct.">
        <title>Sequence of the amino-terminal region of rat liver ribosomal proteins S4, S6, S8, L6, L7a, L18, L27, L30, L37, L37a, and L39.</title>
        <authorList>
            <person name="Wittmann-Liebold B."/>
            <person name="Geissler A.W."/>
            <person name="Lin A."/>
            <person name="Wool I.G."/>
        </authorList>
    </citation>
    <scope>PROTEIN SEQUENCE OF 2-21</scope>
</reference>
<reference key="4">
    <citation type="journal article" date="1994" name="J. Mol. Endocrinol.">
        <title>Isolation of a cDNA whose expression is markedly increased in malignantly transformed FRTL cells and neoplastic human thyroid tissues.</title>
        <authorList>
            <person name="Ohta K."/>
            <person name="Endo T."/>
            <person name="Gunji K."/>
            <person name="Onaya T."/>
        </authorList>
    </citation>
    <scope>NUCLEOTIDE SEQUENCE [MRNA] OF 71-298</scope>
</reference>
<feature type="initiator methionine" description="Removed" evidence="5">
    <location>
        <position position="1"/>
    </location>
</feature>
<feature type="chain" id="PRO_0000171012" description="Large ribosomal subunit protein eL6">
    <location>
        <begin position="2"/>
        <end position="298"/>
    </location>
</feature>
<feature type="region of interest" description="Disordered" evidence="4">
    <location>
        <begin position="1"/>
        <end position="56"/>
    </location>
</feature>
<feature type="compositionally biased region" description="Basic and acidic residues" evidence="4">
    <location>
        <begin position="1"/>
        <end position="16"/>
    </location>
</feature>
<feature type="compositionally biased region" description="Basic residues" evidence="4">
    <location>
        <begin position="39"/>
        <end position="53"/>
    </location>
</feature>
<feature type="modified residue" description="N6-succinyllysine" evidence="1">
    <location>
        <position position="104"/>
    </location>
</feature>
<feature type="modified residue" description="Phosphoserine" evidence="2">
    <location>
        <position position="137"/>
    </location>
</feature>
<feature type="modified residue" description="N6-succinyllysine" evidence="1">
    <location>
        <position position="217"/>
    </location>
</feature>
<feature type="modified residue" description="N6-acetyllysine" evidence="2">
    <location>
        <position position="249"/>
    </location>
</feature>
<feature type="cross-link" description="Glycyl lysine isopeptide (Lys-Gly) (interchain with G-Cter in SUMO2)" evidence="2">
    <location>
        <position position="5"/>
    </location>
</feature>
<feature type="sequence conflict" description="In Ref. 1; CAA60588." evidence="6" ref="1">
    <original>LPAGA</original>
    <variation>GAWC</variation>
    <location>
        <begin position="31"/>
        <end position="35"/>
    </location>
</feature>
<feature type="sequence conflict" description="In Ref. 4; AAB30818." evidence="6" ref="4">
    <original>L</original>
    <variation>P</variation>
    <location>
        <position position="184"/>
    </location>
</feature>
<feature type="sequence conflict" description="In Ref. 4; AAB30818." evidence="6" ref="4">
    <original>LNRVPLRRTHQKFVIATSTKVDISKVKIPK</original>
    <variation>STEFLCVGHTRSLSSPPLQKLISARLKFQ</variation>
    <location>
        <begin position="191"/>
        <end position="220"/>
    </location>
</feature>
<feature type="sequence conflict" description="In Ref. 4; AAB30818." evidence="6" ref="4">
    <original>DSQILPKIKAVPQLQG</original>
    <variation>TRRFCQRSKLSPSSRA</variation>
    <location>
        <begin position="264"/>
        <end position="279"/>
    </location>
</feature>
<organism>
    <name type="scientific">Rattus norvegicus</name>
    <name type="common">Rat</name>
    <dbReference type="NCBI Taxonomy" id="10116"/>
    <lineage>
        <taxon>Eukaryota</taxon>
        <taxon>Metazoa</taxon>
        <taxon>Chordata</taxon>
        <taxon>Craniata</taxon>
        <taxon>Vertebrata</taxon>
        <taxon>Euteleostomi</taxon>
        <taxon>Mammalia</taxon>
        <taxon>Eutheria</taxon>
        <taxon>Euarchontoglires</taxon>
        <taxon>Glires</taxon>
        <taxon>Rodentia</taxon>
        <taxon>Myomorpha</taxon>
        <taxon>Muroidea</taxon>
        <taxon>Muridae</taxon>
        <taxon>Murinae</taxon>
        <taxon>Rattus</taxon>
    </lineage>
</organism>
<gene>
    <name type="primary">Rpl6</name>
</gene>